<accession>P26028</accession>
<reference key="1">
    <citation type="journal article" date="1992" name="Virology">
        <title>Subacute sclerosing panencephalitis is typically characterized by alterations in the fusion protein cytoplasmic domain of the persisting measles virus.</title>
        <authorList>
            <person name="Schmid A."/>
            <person name="Spielhofer P."/>
            <person name="Cattaneo R."/>
            <person name="Baczko K."/>
            <person name="Ter Meulen V."/>
            <person name="Billeter M.A."/>
        </authorList>
    </citation>
    <scope>NUCLEOTIDE SEQUENCE [GENOMIC RNA]</scope>
</reference>
<keyword id="KW-1015">Disulfide bond</keyword>
<keyword id="KW-0325">Glycoprotein</keyword>
<keyword id="KW-0348">Hemagglutinin</keyword>
<keyword id="KW-1032">Host cell membrane</keyword>
<keyword id="KW-1043">Host membrane</keyword>
<keyword id="KW-0945">Host-virus interaction</keyword>
<keyword id="KW-0472">Membrane</keyword>
<keyword id="KW-0735">Signal-anchor</keyword>
<keyword id="KW-0812">Transmembrane</keyword>
<keyword id="KW-1133">Transmembrane helix</keyword>
<keyword id="KW-1161">Viral attachment to host cell</keyword>
<keyword id="KW-0261">Viral envelope protein</keyword>
<keyword id="KW-0946">Virion</keyword>
<keyword id="KW-1160">Virus entry into host cell</keyword>
<name>HEMA_MEASI</name>
<proteinExistence type="inferred from homology"/>
<protein>
    <recommendedName>
        <fullName>Hemagglutinin glycoprotein</fullName>
    </recommendedName>
</protein>
<dbReference type="EMBL" id="X16566">
    <property type="protein sequence ID" value="CAA34569.1"/>
    <property type="molecule type" value="Genomic_RNA"/>
</dbReference>
<dbReference type="GlyCosmos" id="P26028">
    <property type="glycosylation" value="5 sites, No reported glycans"/>
</dbReference>
<dbReference type="GO" id="GO:0020002">
    <property type="term" value="C:host cell plasma membrane"/>
    <property type="evidence" value="ECO:0007669"/>
    <property type="project" value="UniProtKB-SubCell"/>
</dbReference>
<dbReference type="GO" id="GO:0016020">
    <property type="term" value="C:membrane"/>
    <property type="evidence" value="ECO:0007669"/>
    <property type="project" value="UniProtKB-KW"/>
</dbReference>
<dbReference type="GO" id="GO:0019031">
    <property type="term" value="C:viral envelope"/>
    <property type="evidence" value="ECO:0007669"/>
    <property type="project" value="UniProtKB-KW"/>
</dbReference>
<dbReference type="GO" id="GO:0055036">
    <property type="term" value="C:virion membrane"/>
    <property type="evidence" value="ECO:0007669"/>
    <property type="project" value="UniProtKB-SubCell"/>
</dbReference>
<dbReference type="GO" id="GO:0046789">
    <property type="term" value="F:host cell surface receptor binding"/>
    <property type="evidence" value="ECO:0007669"/>
    <property type="project" value="InterPro"/>
</dbReference>
<dbReference type="GO" id="GO:0046718">
    <property type="term" value="P:symbiont entry into host cell"/>
    <property type="evidence" value="ECO:0007669"/>
    <property type="project" value="UniProtKB-KW"/>
</dbReference>
<dbReference type="GO" id="GO:0019062">
    <property type="term" value="P:virion attachment to host cell"/>
    <property type="evidence" value="ECO:0007669"/>
    <property type="project" value="UniProtKB-KW"/>
</dbReference>
<dbReference type="Gene3D" id="2.120.10.10">
    <property type="match status" value="1"/>
</dbReference>
<dbReference type="InterPro" id="IPR000665">
    <property type="entry name" value="Hemagglutn/HN"/>
</dbReference>
<dbReference type="InterPro" id="IPR036278">
    <property type="entry name" value="Sialidase_sf"/>
</dbReference>
<dbReference type="Pfam" id="PF00423">
    <property type="entry name" value="HN"/>
    <property type="match status" value="1"/>
</dbReference>
<dbReference type="SUPFAM" id="SSF50939">
    <property type="entry name" value="Sialidases"/>
    <property type="match status" value="1"/>
</dbReference>
<evidence type="ECO:0000250" key="1"/>
<evidence type="ECO:0000250" key="2">
    <source>
        <dbReference type="UniProtKB" id="P08362"/>
    </source>
</evidence>
<evidence type="ECO:0000250" key="3">
    <source>
        <dbReference type="UniProtKB" id="Q786F2"/>
    </source>
</evidence>
<evidence type="ECO:0000255" key="4"/>
<evidence type="ECO:0000305" key="5"/>
<organismHost>
    <name type="scientific">Homo sapiens</name>
    <name type="common">Human</name>
    <dbReference type="NCBI Taxonomy" id="9606"/>
</organismHost>
<feature type="chain" id="PRO_0000142601" description="Hemagglutinin glycoprotein">
    <location>
        <begin position="1"/>
        <end position="617"/>
    </location>
</feature>
<feature type="topological domain" description="Intravirion" evidence="4">
    <location>
        <begin position="1"/>
        <end position="37"/>
    </location>
</feature>
<feature type="transmembrane region" description="Helical; Signal-anchor for type II membrane protein" evidence="4">
    <location>
        <begin position="38"/>
        <end position="58"/>
    </location>
</feature>
<feature type="topological domain" description="Virion surface" evidence="4">
    <location>
        <begin position="59"/>
        <end position="617"/>
    </location>
</feature>
<feature type="region of interest" description="Stalk" evidence="2">
    <location>
        <begin position="1"/>
        <end position="154"/>
    </location>
</feature>
<feature type="region of interest" description="Interaction with host NECTIN4 receptor" evidence="3">
    <location>
        <begin position="458"/>
        <end position="543"/>
    </location>
</feature>
<feature type="site" description="Interaction with host SLAMF1 receptor" evidence="2">
    <location>
        <position position="483"/>
    </location>
</feature>
<feature type="site" description="Interaction with host SLAMF1 receptor" evidence="2">
    <location>
        <position position="505"/>
    </location>
</feature>
<feature type="site" description="Interaction with host SLAMF1 receptor" evidence="2">
    <location>
        <position position="507"/>
    </location>
</feature>
<feature type="site" description="Interaction with host SLAMF1 receptor" evidence="2">
    <location>
        <position position="524"/>
    </location>
</feature>
<feature type="site" description="Interaction with host SLAMF1 receptor" evidence="2">
    <location>
        <position position="530"/>
    </location>
</feature>
<feature type="site" description="Interaction with host SLAMF1 receptor" evidence="2">
    <location>
        <position position="533"/>
    </location>
</feature>
<feature type="site" description="Interaction with host SLAMF1 receptor" evidence="2">
    <location>
        <position position="541"/>
    </location>
</feature>
<feature type="site" description="Interaction with host SLAMF1 receptor" evidence="2">
    <location>
        <position position="543"/>
    </location>
</feature>
<feature type="site" description="Interaction with host SLAMF1 receptor" evidence="2">
    <location>
        <position position="545"/>
    </location>
</feature>
<feature type="site" description="Interaction with host SLAMF1 receptor" evidence="2">
    <location>
        <position position="552"/>
    </location>
</feature>
<feature type="site" description="Interaction with host SLAMF1 receptor" evidence="2">
    <location>
        <position position="554"/>
    </location>
</feature>
<feature type="glycosylation site" description="N-linked (GlcNAc...) asparagine; by host" evidence="4">
    <location>
        <position position="168"/>
    </location>
</feature>
<feature type="glycosylation site" description="N-linked (GlcNAc...) asparagine; by host" evidence="4">
    <location>
        <position position="187"/>
    </location>
</feature>
<feature type="glycosylation site" description="N-linked (GlcNAc...) asparagine; by host" evidence="4">
    <location>
        <position position="200"/>
    </location>
</feature>
<feature type="glycosylation site" description="N-linked (GlcNAc...) asparagine; by host" evidence="4">
    <location>
        <position position="215"/>
    </location>
</feature>
<feature type="glycosylation site" description="N-linked (GlcNAc...) asparagine; by host" evidence="4">
    <location>
        <position position="238"/>
    </location>
</feature>
<feature type="disulfide bond" description="Interchain" evidence="2">
    <location>
        <position position="139"/>
    </location>
</feature>
<feature type="disulfide bond" description="Interchain" evidence="2">
    <location>
        <position position="154"/>
    </location>
</feature>
<feature type="disulfide bond" evidence="2">
    <location>
        <begin position="188"/>
        <end position="606"/>
    </location>
</feature>
<feature type="disulfide bond" evidence="2">
    <location>
        <begin position="287"/>
        <end position="300"/>
    </location>
</feature>
<feature type="disulfide bond" evidence="2">
    <location>
        <begin position="381"/>
        <end position="494"/>
    </location>
</feature>
<feature type="disulfide bond" evidence="2">
    <location>
        <begin position="386"/>
        <end position="394"/>
    </location>
</feature>
<feature type="disulfide bond" evidence="2">
    <location>
        <begin position="570"/>
        <end position="579"/>
    </location>
</feature>
<gene>
    <name type="primary">H</name>
</gene>
<organism>
    <name type="scientific">Measles virus (strain IP-3-Ca)</name>
    <name type="common">MeV</name>
    <name type="synonym">Subacute sclerose panencephalitis virus</name>
    <dbReference type="NCBI Taxonomy" id="11237"/>
    <lineage>
        <taxon>Viruses</taxon>
        <taxon>Riboviria</taxon>
        <taxon>Orthornavirae</taxon>
        <taxon>Negarnaviricota</taxon>
        <taxon>Haploviricotina</taxon>
        <taxon>Monjiviricetes</taxon>
        <taxon>Mononegavirales</taxon>
        <taxon>Paramyxoviridae</taxon>
        <taxon>Orthoparamyxovirinae</taxon>
        <taxon>Morbillivirus</taxon>
        <taxon>Morbillivirus hominis</taxon>
        <taxon>Measles morbillivirus</taxon>
    </lineage>
</organism>
<comment type="function">
    <text evidence="2 3">Attaches the virus to the human SLAMF1/CD150 receptor for entry into host dendritic cells, macrophages, activated memory T cells and naive or memory B cells, thereby explaining the long immunosuppression that follows infection (By similarity). In the respiratory airways, binds to the NECTIN4 receptor for entry into the host cell (By similarity). Binding of H protein to the receptor induces a conformational change that allows the F protein to trigger virion/cell membranes fusion (By similarity). The vaccine and laboratory-adapted strains use host CD46 as an alternate receptor. The high degree of interaction between H and CD46 results in down-regulation of the latter from the surface of infected cells, rendering them more sensitive to c3b-mediated complement lysis (By similarity).</text>
</comment>
<comment type="subunit">
    <text evidence="2 3">Homodimer; disulfide-linked (By similarity). Further forms homotetramer (dimer of dimers) (By similarity). Interacts (via C-terminus) with human NECTIN4 (via N-terminus); this interaction allows attachment to the respiratory epithelium and viral entry (By similarity). Interacts (via C-terminus) with human SLAMF1/CD150 (via N-terminus); this interaction allows attachment and viral entry into the CD150-expressing immune cells (By similarity).</text>
</comment>
<comment type="subcellular location">
    <subcellularLocation>
        <location evidence="5">Virion membrane</location>
        <topology evidence="5">Single-pass type II membrane protein</topology>
    </subcellularLocation>
    <subcellularLocation>
        <location evidence="1">Host cell membrane</location>
        <topology evidence="1">Single-pass type II membrane protein</topology>
    </subcellularLocation>
</comment>
<comment type="miscellaneous">
    <text evidence="3">Infecting host innate immune cells allows the virus to disseminate from the upper respiratory tract to lymphoid organs, and later back to the respiratory tract.</text>
</comment>
<comment type="similarity">
    <text evidence="5">Belongs to the paramyxoviruses hemagglutinin-neuraminidase family. Non-sialidase subfamily.</text>
</comment>
<comment type="caution">
    <text evidence="5">Morbiliviruses hemagglutinins have no neuraminidase activity.</text>
</comment>
<sequence>MSPQRDRINAFDKDNPHPXXXXXXXXXXXXXXXRPYVLLAVLFVMFLSLIGLLAIAGIRFHRAAIYTAEIHKSLSTNLDVTNSIEHQVKDVLTPLFKIIGDEVGLRTPQRFTDLVKFISDKIKFLNPDREYDFRDLTWCINPPERIKLDYDQYCADVAAEELMNALVNSTLLETRTTNQFLAVSKGNCSGPTTIRGQFSNMSLSLLDLYLSRSYNVSSIVTMTSQGMHGGTYLVGKPNLSNKGSELSQLSMYRVFEVGVIRNPGLGAPVFHMTNYFEQPVSNDLSNCMVALGELKLAALCHGEDSITIPYQGSGKGVSIQLVKLGVWKSPTDMQSWVPLSTDDPVIDRLYLSSHRGVIADNQAKWAVPTTRTDDKLRMETCFQQACRGEVQALCEDPEWAPLKDGRIPSYGVLSVDLSLTVELKIKIASGFGPLITRGSGMDLYRSNHNNVCWLAVPPMKSLALGVVNTLEWMPGFKVGPYLFTVPIKEAGEDCHAPAYLPAEVDGDVKLSSNLVILPGQDLQYVLATYDTSRVEHAVVYYVYSPGRSFSYFYPFRLPIKGVPIELQVECFTWDQKLWCRHFCVLADSESGGHITHSGMVGMGVSCTVTREDGTNCR</sequence>